<keyword id="KW-0150">Chloroplast</keyword>
<keyword id="KW-0934">Plastid</keyword>
<keyword id="KW-0687">Ribonucleoprotein</keyword>
<keyword id="KW-0689">Ribosomal protein</keyword>
<keyword id="KW-0694">RNA-binding</keyword>
<keyword id="KW-0699">rRNA-binding</keyword>
<feature type="chain" id="PRO_0000355512" description="Large ribosomal subunit protein bL20c">
    <location>
        <begin position="1"/>
        <end position="117"/>
    </location>
</feature>
<protein>
    <recommendedName>
        <fullName evidence="1">Large ribosomal subunit protein bL20c</fullName>
    </recommendedName>
    <alternativeName>
        <fullName evidence="2">50S ribosomal protein L20, chloroplastic</fullName>
    </alternativeName>
</protein>
<sequence>MTRIKRGYIARRRRTKLRLFASSFRGAHSRLTRTMTQQRIRALVSAHRDRGKRKRDFRRLWITRINAVIHEMGVFYSYNEFIHNLYTKQLLLNRKILAQIALLNRSCLYTISTEIKN</sequence>
<proteinExistence type="inferred from homology"/>
<name>RK20_LOBMA</name>
<evidence type="ECO:0000255" key="1">
    <source>
        <dbReference type="HAMAP-Rule" id="MF_00382"/>
    </source>
</evidence>
<evidence type="ECO:0000305" key="2"/>
<gene>
    <name evidence="1" type="primary">rpl20</name>
</gene>
<reference key="1">
    <citation type="submission" date="2007-03" db="EMBL/GenBank/DDBJ databases">
        <title>Sequencing analysis of Lobularia maritima chloroplast DNA.</title>
        <authorList>
            <person name="Hosouchi T."/>
            <person name="Tsuruoka H."/>
            <person name="Kotani H."/>
        </authorList>
    </citation>
    <scope>NUCLEOTIDE SEQUENCE [LARGE SCALE GENOMIC DNA]</scope>
</reference>
<comment type="function">
    <text evidence="1">Binds directly to 23S ribosomal RNA and is necessary for the in vitro assembly process of the 50S ribosomal subunit. It is not involved in the protein synthesizing functions of that subunit.</text>
</comment>
<comment type="subcellular location">
    <subcellularLocation>
        <location>Plastid</location>
        <location>Chloroplast</location>
    </subcellularLocation>
</comment>
<comment type="similarity">
    <text evidence="1">Belongs to the bacterial ribosomal protein bL20 family.</text>
</comment>
<geneLocation type="chloroplast"/>
<organism>
    <name type="scientific">Lobularia maritima</name>
    <name type="common">Sweet alyssum</name>
    <name type="synonym">Alyssum maritimum</name>
    <dbReference type="NCBI Taxonomy" id="226051"/>
    <lineage>
        <taxon>Eukaryota</taxon>
        <taxon>Viridiplantae</taxon>
        <taxon>Streptophyta</taxon>
        <taxon>Embryophyta</taxon>
        <taxon>Tracheophyta</taxon>
        <taxon>Spermatophyta</taxon>
        <taxon>Magnoliopsida</taxon>
        <taxon>eudicotyledons</taxon>
        <taxon>Gunneridae</taxon>
        <taxon>Pentapetalae</taxon>
        <taxon>rosids</taxon>
        <taxon>malvids</taxon>
        <taxon>Brassicales</taxon>
        <taxon>Brassicaceae</taxon>
        <taxon>Anastaticeae</taxon>
        <taxon>Lobularia</taxon>
    </lineage>
</organism>
<dbReference type="EMBL" id="AP009375">
    <property type="protein sequence ID" value="BAF50572.1"/>
    <property type="molecule type" value="Genomic_DNA"/>
</dbReference>
<dbReference type="RefSeq" id="YP_001123748.1">
    <property type="nucleotide sequence ID" value="NC_009274.1"/>
</dbReference>
<dbReference type="SMR" id="A4QLL7"/>
<dbReference type="GeneID" id="4964869"/>
<dbReference type="GO" id="GO:0009507">
    <property type="term" value="C:chloroplast"/>
    <property type="evidence" value="ECO:0007669"/>
    <property type="project" value="UniProtKB-SubCell"/>
</dbReference>
<dbReference type="GO" id="GO:1990904">
    <property type="term" value="C:ribonucleoprotein complex"/>
    <property type="evidence" value="ECO:0007669"/>
    <property type="project" value="UniProtKB-KW"/>
</dbReference>
<dbReference type="GO" id="GO:0005840">
    <property type="term" value="C:ribosome"/>
    <property type="evidence" value="ECO:0007669"/>
    <property type="project" value="UniProtKB-KW"/>
</dbReference>
<dbReference type="GO" id="GO:0019843">
    <property type="term" value="F:rRNA binding"/>
    <property type="evidence" value="ECO:0007669"/>
    <property type="project" value="UniProtKB-UniRule"/>
</dbReference>
<dbReference type="GO" id="GO:0003735">
    <property type="term" value="F:structural constituent of ribosome"/>
    <property type="evidence" value="ECO:0007669"/>
    <property type="project" value="InterPro"/>
</dbReference>
<dbReference type="GO" id="GO:0000027">
    <property type="term" value="P:ribosomal large subunit assembly"/>
    <property type="evidence" value="ECO:0007669"/>
    <property type="project" value="UniProtKB-UniRule"/>
</dbReference>
<dbReference type="GO" id="GO:0006412">
    <property type="term" value="P:translation"/>
    <property type="evidence" value="ECO:0007669"/>
    <property type="project" value="InterPro"/>
</dbReference>
<dbReference type="CDD" id="cd07026">
    <property type="entry name" value="Ribosomal_L20"/>
    <property type="match status" value="1"/>
</dbReference>
<dbReference type="FunFam" id="1.10.1900.20:FF:000001">
    <property type="entry name" value="50S ribosomal protein L20"/>
    <property type="match status" value="1"/>
</dbReference>
<dbReference type="Gene3D" id="6.10.160.10">
    <property type="match status" value="1"/>
</dbReference>
<dbReference type="Gene3D" id="1.10.1900.20">
    <property type="entry name" value="Ribosomal protein L20"/>
    <property type="match status" value="1"/>
</dbReference>
<dbReference type="HAMAP" id="MF_00382">
    <property type="entry name" value="Ribosomal_bL20"/>
    <property type="match status" value="1"/>
</dbReference>
<dbReference type="InterPro" id="IPR005813">
    <property type="entry name" value="Ribosomal_bL20"/>
</dbReference>
<dbReference type="InterPro" id="IPR049946">
    <property type="entry name" value="RIBOSOMAL_L20_CS"/>
</dbReference>
<dbReference type="InterPro" id="IPR035566">
    <property type="entry name" value="Ribosomal_protein_bL20_C"/>
</dbReference>
<dbReference type="NCBIfam" id="TIGR01032">
    <property type="entry name" value="rplT_bact"/>
    <property type="match status" value="1"/>
</dbReference>
<dbReference type="PANTHER" id="PTHR10986">
    <property type="entry name" value="39S RIBOSOMAL PROTEIN L20"/>
    <property type="match status" value="1"/>
</dbReference>
<dbReference type="Pfam" id="PF00453">
    <property type="entry name" value="Ribosomal_L20"/>
    <property type="match status" value="1"/>
</dbReference>
<dbReference type="PRINTS" id="PR00062">
    <property type="entry name" value="RIBOSOMALL20"/>
</dbReference>
<dbReference type="SUPFAM" id="SSF74731">
    <property type="entry name" value="Ribosomal protein L20"/>
    <property type="match status" value="1"/>
</dbReference>
<dbReference type="PROSITE" id="PS00937">
    <property type="entry name" value="RIBOSOMAL_L20"/>
    <property type="match status" value="1"/>
</dbReference>
<accession>A4QLL7</accession>